<feature type="chain" id="PRO_1000120382" description="GMP synthase [glutamine-hydrolyzing]">
    <location>
        <begin position="1"/>
        <end position="535"/>
    </location>
</feature>
<feature type="domain" description="Glutamine amidotransferase type-1" evidence="1">
    <location>
        <begin position="24"/>
        <end position="217"/>
    </location>
</feature>
<feature type="domain" description="GMPS ATP-PPase" evidence="1">
    <location>
        <begin position="218"/>
        <end position="410"/>
    </location>
</feature>
<feature type="active site" description="Nucleophile" evidence="1">
    <location>
        <position position="101"/>
    </location>
</feature>
<feature type="active site" evidence="1">
    <location>
        <position position="191"/>
    </location>
</feature>
<feature type="active site" evidence="1">
    <location>
        <position position="193"/>
    </location>
</feature>
<feature type="binding site" evidence="1">
    <location>
        <begin position="245"/>
        <end position="251"/>
    </location>
    <ligand>
        <name>ATP</name>
        <dbReference type="ChEBI" id="CHEBI:30616"/>
    </ligand>
</feature>
<protein>
    <recommendedName>
        <fullName evidence="1">GMP synthase [glutamine-hydrolyzing]</fullName>
        <ecNumber evidence="1">6.3.5.2</ecNumber>
    </recommendedName>
    <alternativeName>
        <fullName evidence="1">GMP synthetase</fullName>
    </alternativeName>
    <alternativeName>
        <fullName evidence="1">Glutamine amidotransferase</fullName>
    </alternativeName>
</protein>
<keyword id="KW-0067">ATP-binding</keyword>
<keyword id="KW-0315">Glutamine amidotransferase</keyword>
<keyword id="KW-0332">GMP biosynthesis</keyword>
<keyword id="KW-0436">Ligase</keyword>
<keyword id="KW-0547">Nucleotide-binding</keyword>
<keyword id="KW-0658">Purine biosynthesis</keyword>
<evidence type="ECO:0000255" key="1">
    <source>
        <dbReference type="HAMAP-Rule" id="MF_00344"/>
    </source>
</evidence>
<organism>
    <name type="scientific">Rhodopseudomonas palustris (strain BisB18)</name>
    <dbReference type="NCBI Taxonomy" id="316056"/>
    <lineage>
        <taxon>Bacteria</taxon>
        <taxon>Pseudomonadati</taxon>
        <taxon>Pseudomonadota</taxon>
        <taxon>Alphaproteobacteria</taxon>
        <taxon>Hyphomicrobiales</taxon>
        <taxon>Nitrobacteraceae</taxon>
        <taxon>Rhodopseudomonas</taxon>
    </lineage>
</organism>
<name>GUAA_RHOPB</name>
<comment type="function">
    <text evidence="1">Catalyzes the synthesis of GMP from XMP.</text>
</comment>
<comment type="catalytic activity">
    <reaction evidence="1">
        <text>XMP + L-glutamine + ATP + H2O = GMP + L-glutamate + AMP + diphosphate + 2 H(+)</text>
        <dbReference type="Rhea" id="RHEA:11680"/>
        <dbReference type="ChEBI" id="CHEBI:15377"/>
        <dbReference type="ChEBI" id="CHEBI:15378"/>
        <dbReference type="ChEBI" id="CHEBI:29985"/>
        <dbReference type="ChEBI" id="CHEBI:30616"/>
        <dbReference type="ChEBI" id="CHEBI:33019"/>
        <dbReference type="ChEBI" id="CHEBI:57464"/>
        <dbReference type="ChEBI" id="CHEBI:58115"/>
        <dbReference type="ChEBI" id="CHEBI:58359"/>
        <dbReference type="ChEBI" id="CHEBI:456215"/>
        <dbReference type="EC" id="6.3.5.2"/>
    </reaction>
</comment>
<comment type="pathway">
    <text evidence="1">Purine metabolism; GMP biosynthesis; GMP from XMP (L-Gln route): step 1/1.</text>
</comment>
<comment type="subunit">
    <text evidence="1">Homodimer.</text>
</comment>
<accession>Q212S9</accession>
<gene>
    <name evidence="1" type="primary">guaA</name>
    <name type="ordered locus">RPC_3063</name>
</gene>
<proteinExistence type="inferred from homology"/>
<reference key="1">
    <citation type="submission" date="2006-03" db="EMBL/GenBank/DDBJ databases">
        <title>Complete sequence of Rhodopseudomonas palustris BisB18.</title>
        <authorList>
            <consortium name="US DOE Joint Genome Institute"/>
            <person name="Copeland A."/>
            <person name="Lucas S."/>
            <person name="Lapidus A."/>
            <person name="Barry K."/>
            <person name="Detter J.C."/>
            <person name="Glavina del Rio T."/>
            <person name="Hammon N."/>
            <person name="Israni S."/>
            <person name="Dalin E."/>
            <person name="Tice H."/>
            <person name="Pitluck S."/>
            <person name="Chain P."/>
            <person name="Malfatti S."/>
            <person name="Shin M."/>
            <person name="Vergez L."/>
            <person name="Schmutz J."/>
            <person name="Larimer F."/>
            <person name="Land M."/>
            <person name="Hauser L."/>
            <person name="Pelletier D.A."/>
            <person name="Kyrpides N."/>
            <person name="Anderson I."/>
            <person name="Oda Y."/>
            <person name="Harwood C.S."/>
            <person name="Richardson P."/>
        </authorList>
    </citation>
    <scope>NUCLEOTIDE SEQUENCE [LARGE SCALE GENOMIC DNA]</scope>
    <source>
        <strain>BisB18</strain>
    </source>
</reference>
<sequence>MTAPSKTSASPVDPSPHVAAAHDKILIVDFGSQVTQLIARRVREEGVYSEIVPFNKAEAAFAAMKPKAVILSGGPASVLDDDAPQAPLSILTAGVPILGICYGEQTLAKQLGGIVEGGHHREFGRAQIEITDDCALFDGVWEKGGKYDVWMSHGDRVTQLPEGFRGVAKAAGSPISVIADDARKFYAMQFHPEVVHTPDGAKLIRNFVRKVAGLKGDWTMRAFREEAIEKIRAQVGSGKVICGLSGGVDSAVAAVLIHEAIGDQLTCVFVDHGLLRKDEGKTVVDLFRHHYNIPLVHVDAAKLFLGELEGVSDPELKRKTIGRLFINVFEGEAKMIGGADFLAQGTLYPDVIESVSFTGGPSVTIKSHHNVGGLPERMNMQLVEPLRELFKDEVRVLGRELGLPEVFVGRHPFPGPGLAIRCPGEITAEKLEILRNADAVYIDQIRKAGLYDKIWQAFAVLLPVKTVGVMGDGRTYEYVVGLRAVTSTDGMTADFYGFEMSFLGAAATRIINEVKGVNRVVYDITSKPPGTIEWE</sequence>
<dbReference type="EC" id="6.3.5.2" evidence="1"/>
<dbReference type="EMBL" id="CP000301">
    <property type="protein sequence ID" value="ABD88607.1"/>
    <property type="molecule type" value="Genomic_DNA"/>
</dbReference>
<dbReference type="SMR" id="Q212S9"/>
<dbReference type="STRING" id="316056.RPC_3063"/>
<dbReference type="MEROPS" id="C26.A07"/>
<dbReference type="KEGG" id="rpc:RPC_3063"/>
<dbReference type="eggNOG" id="COG0518">
    <property type="taxonomic scope" value="Bacteria"/>
</dbReference>
<dbReference type="eggNOG" id="COG0519">
    <property type="taxonomic scope" value="Bacteria"/>
</dbReference>
<dbReference type="HOGENOM" id="CLU_014340_0_5_5"/>
<dbReference type="OrthoDB" id="9802219at2"/>
<dbReference type="UniPathway" id="UPA00189">
    <property type="reaction ID" value="UER00296"/>
</dbReference>
<dbReference type="GO" id="GO:0005829">
    <property type="term" value="C:cytosol"/>
    <property type="evidence" value="ECO:0007669"/>
    <property type="project" value="TreeGrafter"/>
</dbReference>
<dbReference type="GO" id="GO:0005524">
    <property type="term" value="F:ATP binding"/>
    <property type="evidence" value="ECO:0007669"/>
    <property type="project" value="UniProtKB-UniRule"/>
</dbReference>
<dbReference type="GO" id="GO:0003921">
    <property type="term" value="F:GMP synthase activity"/>
    <property type="evidence" value="ECO:0007669"/>
    <property type="project" value="InterPro"/>
</dbReference>
<dbReference type="CDD" id="cd01742">
    <property type="entry name" value="GATase1_GMP_Synthase"/>
    <property type="match status" value="1"/>
</dbReference>
<dbReference type="CDD" id="cd01997">
    <property type="entry name" value="GMP_synthase_C"/>
    <property type="match status" value="1"/>
</dbReference>
<dbReference type="FunFam" id="3.30.300.10:FF:000002">
    <property type="entry name" value="GMP synthase [glutamine-hydrolyzing]"/>
    <property type="match status" value="1"/>
</dbReference>
<dbReference type="FunFam" id="3.40.50.620:FF:000001">
    <property type="entry name" value="GMP synthase [glutamine-hydrolyzing]"/>
    <property type="match status" value="1"/>
</dbReference>
<dbReference type="FunFam" id="3.40.50.880:FF:000001">
    <property type="entry name" value="GMP synthase [glutamine-hydrolyzing]"/>
    <property type="match status" value="1"/>
</dbReference>
<dbReference type="Gene3D" id="3.30.300.10">
    <property type="match status" value="1"/>
</dbReference>
<dbReference type="Gene3D" id="3.40.50.880">
    <property type="match status" value="1"/>
</dbReference>
<dbReference type="Gene3D" id="3.40.50.620">
    <property type="entry name" value="HUPs"/>
    <property type="match status" value="1"/>
</dbReference>
<dbReference type="HAMAP" id="MF_00344">
    <property type="entry name" value="GMP_synthase"/>
    <property type="match status" value="1"/>
</dbReference>
<dbReference type="InterPro" id="IPR029062">
    <property type="entry name" value="Class_I_gatase-like"/>
</dbReference>
<dbReference type="InterPro" id="IPR017926">
    <property type="entry name" value="GATASE"/>
</dbReference>
<dbReference type="InterPro" id="IPR001674">
    <property type="entry name" value="GMP_synth_C"/>
</dbReference>
<dbReference type="InterPro" id="IPR004739">
    <property type="entry name" value="GMP_synth_GATase"/>
</dbReference>
<dbReference type="InterPro" id="IPR022955">
    <property type="entry name" value="GMP_synthase"/>
</dbReference>
<dbReference type="InterPro" id="IPR025777">
    <property type="entry name" value="GMPS_ATP_PPase_dom"/>
</dbReference>
<dbReference type="InterPro" id="IPR022310">
    <property type="entry name" value="NAD/GMP_synthase"/>
</dbReference>
<dbReference type="InterPro" id="IPR014729">
    <property type="entry name" value="Rossmann-like_a/b/a_fold"/>
</dbReference>
<dbReference type="NCBIfam" id="TIGR00884">
    <property type="entry name" value="guaA_Cterm"/>
    <property type="match status" value="1"/>
</dbReference>
<dbReference type="NCBIfam" id="TIGR00888">
    <property type="entry name" value="guaA_Nterm"/>
    <property type="match status" value="1"/>
</dbReference>
<dbReference type="NCBIfam" id="NF000848">
    <property type="entry name" value="PRK00074.1"/>
    <property type="match status" value="1"/>
</dbReference>
<dbReference type="PANTHER" id="PTHR11922:SF2">
    <property type="entry name" value="GMP SYNTHASE [GLUTAMINE-HYDROLYZING]"/>
    <property type="match status" value="1"/>
</dbReference>
<dbReference type="PANTHER" id="PTHR11922">
    <property type="entry name" value="GMP SYNTHASE-RELATED"/>
    <property type="match status" value="1"/>
</dbReference>
<dbReference type="Pfam" id="PF00117">
    <property type="entry name" value="GATase"/>
    <property type="match status" value="1"/>
</dbReference>
<dbReference type="Pfam" id="PF00958">
    <property type="entry name" value="GMP_synt_C"/>
    <property type="match status" value="1"/>
</dbReference>
<dbReference type="Pfam" id="PF02540">
    <property type="entry name" value="NAD_synthase"/>
    <property type="match status" value="1"/>
</dbReference>
<dbReference type="PRINTS" id="PR00097">
    <property type="entry name" value="ANTSNTHASEII"/>
</dbReference>
<dbReference type="PRINTS" id="PR00096">
    <property type="entry name" value="GATASE"/>
</dbReference>
<dbReference type="SUPFAM" id="SSF52402">
    <property type="entry name" value="Adenine nucleotide alpha hydrolases-like"/>
    <property type="match status" value="1"/>
</dbReference>
<dbReference type="SUPFAM" id="SSF52317">
    <property type="entry name" value="Class I glutamine amidotransferase-like"/>
    <property type="match status" value="1"/>
</dbReference>
<dbReference type="SUPFAM" id="SSF54810">
    <property type="entry name" value="GMP synthetase C-terminal dimerisation domain"/>
    <property type="match status" value="1"/>
</dbReference>
<dbReference type="PROSITE" id="PS51273">
    <property type="entry name" value="GATASE_TYPE_1"/>
    <property type="match status" value="1"/>
</dbReference>
<dbReference type="PROSITE" id="PS51553">
    <property type="entry name" value="GMPS_ATP_PPASE"/>
    <property type="match status" value="1"/>
</dbReference>